<protein>
    <recommendedName>
        <fullName>Uncharacterized 6.8 kDa protein in fosB 5'region</fullName>
    </recommendedName>
</protein>
<reference key="1">
    <citation type="journal article" date="1990" name="FEMS Microbiol. Lett.">
        <title>Nucleotide sequence of the fosB gene conferring fosfomycin resistance in Staphylococcus epidermidis.</title>
        <authorList>
            <person name="Zilhao R."/>
            <person name="Courvalin P."/>
        </authorList>
    </citation>
    <scope>NUCLEOTIDE SEQUENCE [GENOMIC DNA]</scope>
    <source>
        <strain>BM2641</strain>
    </source>
</reference>
<name>YFOB_STAEP</name>
<accession>Q03382</accession>
<dbReference type="EMBL" id="X54227">
    <property type="protein sequence ID" value="CAA38135.1"/>
    <property type="molecule type" value="Genomic_DNA"/>
</dbReference>
<dbReference type="PIR" id="A48175">
    <property type="entry name" value="A48175"/>
</dbReference>
<dbReference type="RefSeq" id="WP_032488467.1">
    <property type="nucleotide sequence ID" value="NZ_CP064577.1"/>
</dbReference>
<dbReference type="SMR" id="Q03382"/>
<proteinExistence type="predicted"/>
<geneLocation type="plasmid">
    <name>pIP1842</name>
</geneLocation>
<sequence length="61" mass="6830">MPEKTKLGNSLSFNYFLLLVGVLTFLGYYFLGDSNIMISWLLAMCPITVGIANIGRIKNEK</sequence>
<keyword id="KW-0614">Plasmid</keyword>
<feature type="chain" id="PRO_0000066215" description="Uncharacterized 6.8 kDa protein in fosB 5'region">
    <location>
        <begin position="1"/>
        <end position="61"/>
    </location>
</feature>
<organism>
    <name type="scientific">Staphylococcus epidermidis</name>
    <dbReference type="NCBI Taxonomy" id="1282"/>
    <lineage>
        <taxon>Bacteria</taxon>
        <taxon>Bacillati</taxon>
        <taxon>Bacillota</taxon>
        <taxon>Bacilli</taxon>
        <taxon>Bacillales</taxon>
        <taxon>Staphylococcaceae</taxon>
        <taxon>Staphylococcus</taxon>
    </lineage>
</organism>